<name>ACT1_SACKO</name>
<comment type="function">
    <text>Actins are highly conserved proteins that are involved in various types of cell motility and are ubiquitously expressed in all eukaryotic cells.</text>
</comment>
<comment type="catalytic activity">
    <reaction evidence="2">
        <text>ATP + H2O = ADP + phosphate + H(+)</text>
        <dbReference type="Rhea" id="RHEA:13065"/>
        <dbReference type="ChEBI" id="CHEBI:15377"/>
        <dbReference type="ChEBI" id="CHEBI:15378"/>
        <dbReference type="ChEBI" id="CHEBI:30616"/>
        <dbReference type="ChEBI" id="CHEBI:43474"/>
        <dbReference type="ChEBI" id="CHEBI:456216"/>
    </reaction>
</comment>
<comment type="subcellular location">
    <subcellularLocation>
        <location>Cytoplasm</location>
        <location>Cytoskeleton</location>
    </subcellularLocation>
</comment>
<comment type="similarity">
    <text evidence="3">Belongs to the actin family.</text>
</comment>
<sequence length="376" mass="41892">MCDEEVAALVVDNGSGMCKAGFAGDDAPRAIFPSIVGRPRHQGVMVGMGQKDSYVGDEAQSKRGILTLKYPIEHGIVTNWDDMEKIWHHTFYNELRVAPEEHPVLLTEAPLNPKANREKMTQIMFETFNTPAMYVAIQAVLSLYASGRTTGIVMDTGDGVTHTVPIYEGYALPHAILRLDLAGRDLTDYLMKILTERGYSFTTTAEREIVRDIKEKLCYVALDFEQEMATAASSSSLEKSYELPDGQVITIGNERFRCPEALFQPAFLGMESPGIHETTYNSIMKCDIDIRKDLYANTVLSGGTSMYPGIADRMQKEITSLAPSTMKIKIIAPPERKYSVWIGGSILASLSTFQQMWISKQEYDESGPSIVHRKCF</sequence>
<keyword id="KW-0007">Acetylation</keyword>
<keyword id="KW-0067">ATP-binding</keyword>
<keyword id="KW-0963">Cytoplasm</keyword>
<keyword id="KW-0206">Cytoskeleton</keyword>
<keyword id="KW-0378">Hydrolase</keyword>
<keyword id="KW-0547">Nucleotide-binding</keyword>
<proteinExistence type="evidence at transcript level"/>
<feature type="propeptide" id="PRO_0000000714" description="Removed in mature form" evidence="1">
    <location>
        <begin position="1"/>
        <end position="2"/>
    </location>
</feature>
<feature type="chain" id="PRO_0000000715" description="Actin-1">
    <location>
        <begin position="3"/>
        <end position="376"/>
    </location>
</feature>
<feature type="modified residue" description="N-acetylaspartate" evidence="1">
    <location>
        <position position="3"/>
    </location>
</feature>
<dbReference type="EC" id="3.6.4.-" evidence="2"/>
<dbReference type="EMBL" id="Y13664">
    <property type="protein sequence ID" value="CAA74015.1"/>
    <property type="molecule type" value="mRNA"/>
</dbReference>
<dbReference type="RefSeq" id="NP_001158422.1">
    <property type="nucleotide sequence ID" value="NM_001164950.1"/>
</dbReference>
<dbReference type="SMR" id="O18499"/>
<dbReference type="EnsemblMetazoa" id="NM_001164950.1">
    <property type="protein sequence ID" value="NP_001158422.1"/>
    <property type="gene ID" value="GeneID_100303600"/>
</dbReference>
<dbReference type="GeneID" id="100303600"/>
<dbReference type="KEGG" id="sko:100303600"/>
<dbReference type="CTD" id="109776"/>
<dbReference type="OrthoDB" id="9973372at2759"/>
<dbReference type="Proteomes" id="UP000694865">
    <property type="component" value="Unplaced"/>
</dbReference>
<dbReference type="GO" id="GO:0005737">
    <property type="term" value="C:cytoplasm"/>
    <property type="evidence" value="ECO:0007669"/>
    <property type="project" value="UniProtKB-KW"/>
</dbReference>
<dbReference type="GO" id="GO:0005856">
    <property type="term" value="C:cytoskeleton"/>
    <property type="evidence" value="ECO:0007669"/>
    <property type="project" value="UniProtKB-SubCell"/>
</dbReference>
<dbReference type="GO" id="GO:0005524">
    <property type="term" value="F:ATP binding"/>
    <property type="evidence" value="ECO:0007669"/>
    <property type="project" value="UniProtKB-KW"/>
</dbReference>
<dbReference type="GO" id="GO:0016787">
    <property type="term" value="F:hydrolase activity"/>
    <property type="evidence" value="ECO:0007669"/>
    <property type="project" value="UniProtKB-KW"/>
</dbReference>
<dbReference type="CDD" id="cd10224">
    <property type="entry name" value="ASKHA_NBD_actin"/>
    <property type="match status" value="1"/>
</dbReference>
<dbReference type="FunFam" id="3.30.420.40:FF:000131">
    <property type="entry name" value="Actin, alpha skeletal muscle"/>
    <property type="match status" value="1"/>
</dbReference>
<dbReference type="FunFam" id="3.30.420.40:FF:000291">
    <property type="entry name" value="Actin, alpha skeletal muscle"/>
    <property type="match status" value="1"/>
</dbReference>
<dbReference type="FunFam" id="3.90.640.10:FF:000047">
    <property type="entry name" value="Actin, alpha skeletal muscle"/>
    <property type="match status" value="1"/>
</dbReference>
<dbReference type="FunFam" id="3.30.420.40:FF:000058">
    <property type="entry name" value="Putative actin-related protein 5"/>
    <property type="match status" value="1"/>
</dbReference>
<dbReference type="Gene3D" id="3.30.420.40">
    <property type="match status" value="2"/>
</dbReference>
<dbReference type="Gene3D" id="3.90.640.10">
    <property type="entry name" value="Actin, Chain A, domain 4"/>
    <property type="match status" value="1"/>
</dbReference>
<dbReference type="InterPro" id="IPR004000">
    <property type="entry name" value="Actin"/>
</dbReference>
<dbReference type="InterPro" id="IPR020902">
    <property type="entry name" value="Actin/actin-like_CS"/>
</dbReference>
<dbReference type="InterPro" id="IPR004001">
    <property type="entry name" value="Actin_CS"/>
</dbReference>
<dbReference type="InterPro" id="IPR043129">
    <property type="entry name" value="ATPase_NBD"/>
</dbReference>
<dbReference type="PANTHER" id="PTHR11937">
    <property type="entry name" value="ACTIN"/>
    <property type="match status" value="1"/>
</dbReference>
<dbReference type="Pfam" id="PF00022">
    <property type="entry name" value="Actin"/>
    <property type="match status" value="1"/>
</dbReference>
<dbReference type="PRINTS" id="PR00190">
    <property type="entry name" value="ACTIN"/>
</dbReference>
<dbReference type="SMART" id="SM00268">
    <property type="entry name" value="ACTIN"/>
    <property type="match status" value="1"/>
</dbReference>
<dbReference type="SUPFAM" id="SSF53067">
    <property type="entry name" value="Actin-like ATPase domain"/>
    <property type="match status" value="2"/>
</dbReference>
<dbReference type="PROSITE" id="PS00406">
    <property type="entry name" value="ACTINS_1"/>
    <property type="match status" value="1"/>
</dbReference>
<dbReference type="PROSITE" id="PS00432">
    <property type="entry name" value="ACTINS_2"/>
    <property type="match status" value="1"/>
</dbReference>
<dbReference type="PROSITE" id="PS01132">
    <property type="entry name" value="ACTINS_ACT_LIKE"/>
    <property type="match status" value="1"/>
</dbReference>
<accession>O18499</accession>
<evidence type="ECO:0000250" key="1"/>
<evidence type="ECO:0000250" key="2">
    <source>
        <dbReference type="UniProtKB" id="P68137"/>
    </source>
</evidence>
<evidence type="ECO:0000305" key="3"/>
<protein>
    <recommendedName>
        <fullName>Actin-1</fullName>
        <ecNumber evidence="2">3.6.4.-</ecNumber>
    </recommendedName>
</protein>
<organism>
    <name type="scientific">Saccoglossus kowalevskii</name>
    <name type="common">Acorn worm</name>
    <dbReference type="NCBI Taxonomy" id="10224"/>
    <lineage>
        <taxon>Eukaryota</taxon>
        <taxon>Metazoa</taxon>
        <taxon>Hemichordata</taxon>
        <taxon>Enteropneusta</taxon>
        <taxon>Harrimaniidae</taxon>
        <taxon>Saccoglossus</taxon>
    </lineage>
</organism>
<reference key="1">
    <citation type="journal article" date="1997" name="J. Mol. Evol.">
        <title>Deuterostomic actin genes and the definition of the chordates: cDNA cloning and gene organization for cephalochordates and hemichordates.</title>
        <authorList>
            <person name="Bovenschulte M."/>
            <person name="Weber K."/>
        </authorList>
    </citation>
    <scope>NUCLEOTIDE SEQUENCE [MRNA]</scope>
</reference>